<name>XYN1_LEUGO</name>
<proteinExistence type="evidence at protein level"/>
<keyword id="KW-0119">Carbohydrate metabolism</keyword>
<keyword id="KW-0325">Glycoprotein</keyword>
<keyword id="KW-0326">Glycosidase</keyword>
<keyword id="KW-0378">Hydrolase</keyword>
<keyword id="KW-0624">Polysaccharide degradation</keyword>
<keyword id="KW-0964">Secreted</keyword>
<keyword id="KW-0732">Signal</keyword>
<keyword id="KW-0858">Xylan degradation</keyword>
<reference key="1">
    <citation type="journal article" date="2008" name="BMC Microbiol.">
        <title>Towards a molecular understanding of symbiont function: Identification of a fungal gene for the degradation of xylan in the fungus gardens of leaf-cutting ants.</title>
        <authorList>
            <person name="Schioett M."/>
            <person name="De Fine Licht H.H."/>
            <person name="Lange L."/>
            <person name="Boomsma J.J."/>
        </authorList>
    </citation>
    <scope>NUCLEOTIDE SEQUENCE [GENOMIC DNA]</scope>
    <scope>FUNCTION</scope>
    <scope>CATALYTIC ACTIVITY</scope>
</reference>
<comment type="function">
    <text evidence="6">Endo-1,4-beta-xylanase involved in the hydrolysis of xylan, a major structural heterogeneous polysaccharide found in plant biomass representing the second most abundant polysaccharide in the biosphere, after cellulose.</text>
</comment>
<comment type="catalytic activity">
    <reaction evidence="6">
        <text>Endohydrolysis of (1-&gt;4)-beta-D-xylosidic linkages in xylans.</text>
        <dbReference type="EC" id="3.2.1.8"/>
    </reaction>
</comment>
<comment type="pathway">
    <text>Glycan degradation; xylan degradation.</text>
</comment>
<comment type="subcellular location">
    <subcellularLocation>
        <location evidence="1">Secreted</location>
    </subcellularLocation>
</comment>
<comment type="similarity">
    <text evidence="7">Belongs to the glycosyl hydrolase 11 (cellulase G) family.</text>
</comment>
<sequence length="234" mass="25156">MVSFIFTRIILFAAAINGAVALPMNTTEPEDFSILSRSGTPSSTGYSNGYYYSWWTDGAAQATYANGGGGQYSLNWSGNNGNLVGGKGWNPGFNGRVIQYSGTYQPNGNSYLSVYGWTLNPLIEYYIVESYGSYNPSSAAARKGSVNCDGANYDILTTTRYNEPSINGTQTFQQFWSVRNPKKNPGGSISGSVSTGCHFTAWGNLGMNLGSTWNYQIVATEGYQSSGFSSITVA</sequence>
<dbReference type="EC" id="3.2.1.8"/>
<dbReference type="EMBL" id="EF208066">
    <property type="protein sequence ID" value="ABN81018.1"/>
    <property type="molecule type" value="Genomic_DNA"/>
</dbReference>
<dbReference type="SMR" id="A6YAP7"/>
<dbReference type="CAZy" id="GH11">
    <property type="family name" value="Glycoside Hydrolase Family 11"/>
</dbReference>
<dbReference type="GlyCosmos" id="A6YAP7">
    <property type="glycosylation" value="3 sites, No reported glycans"/>
</dbReference>
<dbReference type="UniPathway" id="UPA00114"/>
<dbReference type="GO" id="GO:0005576">
    <property type="term" value="C:extracellular region"/>
    <property type="evidence" value="ECO:0007669"/>
    <property type="project" value="UniProtKB-SubCell"/>
</dbReference>
<dbReference type="GO" id="GO:0031176">
    <property type="term" value="F:endo-1,4-beta-xylanase activity"/>
    <property type="evidence" value="ECO:0007669"/>
    <property type="project" value="UniProtKB-EC"/>
</dbReference>
<dbReference type="GO" id="GO:0045493">
    <property type="term" value="P:xylan catabolic process"/>
    <property type="evidence" value="ECO:0007669"/>
    <property type="project" value="UniProtKB-UniPathway"/>
</dbReference>
<dbReference type="FunFam" id="2.60.120.180:FF:000001">
    <property type="entry name" value="Endo-1,4-beta-xylanase"/>
    <property type="match status" value="1"/>
</dbReference>
<dbReference type="Gene3D" id="2.60.120.180">
    <property type="match status" value="1"/>
</dbReference>
<dbReference type="InterPro" id="IPR013320">
    <property type="entry name" value="ConA-like_dom_sf"/>
</dbReference>
<dbReference type="InterPro" id="IPR013319">
    <property type="entry name" value="GH11/12"/>
</dbReference>
<dbReference type="InterPro" id="IPR018208">
    <property type="entry name" value="GH11_AS_1"/>
</dbReference>
<dbReference type="InterPro" id="IPR033119">
    <property type="entry name" value="GH11_AS_2"/>
</dbReference>
<dbReference type="InterPro" id="IPR033123">
    <property type="entry name" value="GH11_dom"/>
</dbReference>
<dbReference type="InterPro" id="IPR001137">
    <property type="entry name" value="Glyco_hydro_11"/>
</dbReference>
<dbReference type="PANTHER" id="PTHR46828">
    <property type="entry name" value="ENDO-1,4-BETA-XYLANASE A-RELATED"/>
    <property type="match status" value="1"/>
</dbReference>
<dbReference type="PANTHER" id="PTHR46828:SF2">
    <property type="entry name" value="ENDO-1,4-BETA-XYLANASE A-RELATED"/>
    <property type="match status" value="1"/>
</dbReference>
<dbReference type="Pfam" id="PF00457">
    <property type="entry name" value="Glyco_hydro_11"/>
    <property type="match status" value="1"/>
</dbReference>
<dbReference type="PRINTS" id="PR00911">
    <property type="entry name" value="GLHYDRLASE11"/>
</dbReference>
<dbReference type="SUPFAM" id="SSF49899">
    <property type="entry name" value="Concanavalin A-like lectins/glucanases"/>
    <property type="match status" value="1"/>
</dbReference>
<dbReference type="PROSITE" id="PS00776">
    <property type="entry name" value="GH11_1"/>
    <property type="match status" value="1"/>
</dbReference>
<dbReference type="PROSITE" id="PS00777">
    <property type="entry name" value="GH11_2"/>
    <property type="match status" value="1"/>
</dbReference>
<dbReference type="PROSITE" id="PS51761">
    <property type="entry name" value="GH11_3"/>
    <property type="match status" value="1"/>
</dbReference>
<evidence type="ECO:0000250" key="1"/>
<evidence type="ECO:0000255" key="2"/>
<evidence type="ECO:0000255" key="3">
    <source>
        <dbReference type="PROSITE-ProRule" id="PRU01097"/>
    </source>
</evidence>
<evidence type="ECO:0000255" key="4">
    <source>
        <dbReference type="PROSITE-ProRule" id="PRU10062"/>
    </source>
</evidence>
<evidence type="ECO:0000255" key="5">
    <source>
        <dbReference type="PROSITE-ProRule" id="PRU10063"/>
    </source>
</evidence>
<evidence type="ECO:0000269" key="6">
    <source>
    </source>
</evidence>
<evidence type="ECO:0000305" key="7"/>
<accession>A6YAP7</accession>
<protein>
    <recommendedName>
        <fullName>Endo-1,4-beta-xylanase 1</fullName>
        <shortName>Xylanase 1</shortName>
        <ecNumber>3.2.1.8</ecNumber>
    </recommendedName>
    <alternativeName>
        <fullName>1,4-beta-D-xylan xylanohydrolase 1</fullName>
    </alternativeName>
</protein>
<gene>
    <name type="primary">Xyn1</name>
</gene>
<organism>
    <name type="scientific">Leucoagaricus gongylophorus</name>
    <name type="common">Leaf-cutting ant fungus</name>
    <dbReference type="NCBI Taxonomy" id="79220"/>
    <lineage>
        <taxon>Eukaryota</taxon>
        <taxon>Fungi</taxon>
        <taxon>Dikarya</taxon>
        <taxon>Basidiomycota</taxon>
        <taxon>Agaricomycotina</taxon>
        <taxon>Agaricomycetes</taxon>
        <taxon>Agaricomycetidae</taxon>
        <taxon>Agaricales</taxon>
        <taxon>Agaricineae</taxon>
        <taxon>Agaricaceae</taxon>
        <taxon>Leucoagaricus</taxon>
    </lineage>
</organism>
<feature type="signal peptide" evidence="2">
    <location>
        <begin position="1"/>
        <end position="21"/>
    </location>
</feature>
<feature type="chain" id="PRO_0000429619" description="Endo-1,4-beta-xylanase 1">
    <location>
        <begin position="22"/>
        <end position="234"/>
    </location>
</feature>
<feature type="domain" description="GH11" evidence="3">
    <location>
        <begin position="38"/>
        <end position="234"/>
    </location>
</feature>
<feature type="active site" description="Nucleophile" evidence="4">
    <location>
        <position position="124"/>
    </location>
</feature>
<feature type="active site" description="Proton donor" evidence="5">
    <location>
        <position position="221"/>
    </location>
</feature>
<feature type="glycosylation site" description="N-linked (GlcNAc...) asparagine" evidence="2">
    <location>
        <position position="25"/>
    </location>
</feature>
<feature type="glycosylation site" description="N-linked (GlcNAc...) asparagine" evidence="2">
    <location>
        <position position="75"/>
    </location>
</feature>
<feature type="glycosylation site" description="N-linked (GlcNAc...) asparagine" evidence="2">
    <location>
        <position position="167"/>
    </location>
</feature>